<keyword id="KW-0067">ATP-binding</keyword>
<keyword id="KW-0963">Cytoplasm</keyword>
<keyword id="KW-0436">Ligase</keyword>
<keyword id="KW-0460">Magnesium</keyword>
<keyword id="KW-0479">Metal-binding</keyword>
<keyword id="KW-0547">Nucleotide-binding</keyword>
<comment type="function">
    <text evidence="2">Glutamine synthetase (GS) is an unusual multitasking protein that functions as an enzyme, a transcription coregulator, and a chaperone in ammonium assimilation and in the regulation of genes involved in nitrogen metabolism. It catalyzes the ATP-dependent biosynthesis of glutamine from glutamate and ammonia. Feedback-inhibited GlnA also interacts with and regulates the activity of the transcriptional regulator TnrA. During nitrogen limitation, TnrA is in its DNA-binding active state and turns on the transcription of genes required for nitrogen assimilation. Under conditions of nitrogen excess, feedback-inhibited GlnA forms a stable complex with TnrA, which inhibits its DNA-binding activity. In contrast, feedback-inhibited GlnA acts as a chaperone to stabilize the DNA-binding activity of GlnR, which represses the transcription of nitrogen assimilation genes.</text>
</comment>
<comment type="catalytic activity">
    <reaction evidence="2">
        <text>L-glutamate + NH4(+) + ATP = L-glutamine + ADP + phosphate + H(+)</text>
        <dbReference type="Rhea" id="RHEA:16169"/>
        <dbReference type="ChEBI" id="CHEBI:15378"/>
        <dbReference type="ChEBI" id="CHEBI:28938"/>
        <dbReference type="ChEBI" id="CHEBI:29985"/>
        <dbReference type="ChEBI" id="CHEBI:30616"/>
        <dbReference type="ChEBI" id="CHEBI:43474"/>
        <dbReference type="ChEBI" id="CHEBI:58359"/>
        <dbReference type="ChEBI" id="CHEBI:456216"/>
        <dbReference type="EC" id="6.3.1.2"/>
    </reaction>
</comment>
<comment type="cofactor">
    <cofactor evidence="2">
        <name>Mg(2+)</name>
        <dbReference type="ChEBI" id="CHEBI:18420"/>
    </cofactor>
    <text evidence="2">Binds 2 Mg(2+) ions per subunit.</text>
</comment>
<comment type="activity regulation">
    <text evidence="2">Inhibited by glutamine.</text>
</comment>
<comment type="subunit">
    <text evidence="2">Oligomer of 12 subunits arranged in the form of two hexagons. In its feedback-inhibited form, interacts with TnrA in order to block its DNA-binding activity.</text>
</comment>
<comment type="subcellular location">
    <subcellularLocation>
        <location evidence="2">Cytoplasm</location>
    </subcellularLocation>
</comment>
<comment type="similarity">
    <text evidence="7">Belongs to the glutamine synthetase family.</text>
</comment>
<name>GLN1A_STAES</name>
<protein>
    <recommendedName>
        <fullName evidence="2">Glutamine synthetase</fullName>
        <shortName evidence="2">GS</shortName>
        <ecNumber evidence="2">6.3.1.2</ecNumber>
    </recommendedName>
    <alternativeName>
        <fullName evidence="2">Glutamate--ammonia ligase</fullName>
    </alternativeName>
    <alternativeName>
        <fullName evidence="2">Glutamine synthetase I alpha</fullName>
        <shortName evidence="2">GSI alpha</shortName>
    </alternativeName>
</protein>
<evidence type="ECO:0000250" key="1">
    <source>
        <dbReference type="UniProtKB" id="P0A1P6"/>
    </source>
</evidence>
<evidence type="ECO:0000250" key="2">
    <source>
        <dbReference type="UniProtKB" id="P12425"/>
    </source>
</evidence>
<evidence type="ECO:0000250" key="3">
    <source>
        <dbReference type="UniProtKB" id="P77961"/>
    </source>
</evidence>
<evidence type="ECO:0000250" key="4">
    <source>
        <dbReference type="UniProtKB" id="P9WN39"/>
    </source>
</evidence>
<evidence type="ECO:0000255" key="5">
    <source>
        <dbReference type="PROSITE-ProRule" id="PRU01330"/>
    </source>
</evidence>
<evidence type="ECO:0000255" key="6">
    <source>
        <dbReference type="PROSITE-ProRule" id="PRU01331"/>
    </source>
</evidence>
<evidence type="ECO:0000305" key="7"/>
<gene>
    <name evidence="2" type="primary">glnA</name>
    <name type="ordered locus">SE_0987</name>
</gene>
<sequence length="446" mass="50851">MPKRSFTKDDIRKFAEEENVRYLRLQFTDILGTIKNVEVPVSQLEKVLDNEMMFDGSSIEGFVRIEESDMYLHPDLDTWVIFPWTAGQGKVARLICDVFKTDGTPFEGDPRANLKRVLRRMEDMGFTDFNLGPEPEFFLFKLDEKGEPTLELNDDGGYFDLAPTDLGENCRRDIVLELEDMGFDIEASHHEVAPGQHEIDFKYADAVTACDNIQTFKLVVKTIARKHNLHATFMPKPLFGVNGSGMHFNVSLFKGKENAFFDPEGDLQLTDTAYQFTAGVLKNARGFTAVCNPIVNSYKRLVPGYEAPCYIAWSGKNRSPLVRVPTSRGLSTRIEVRSVDPAANPYMALAAILEAGLDGIENKLEVPEPVNQNIYEMNREEREAVGIQDLPSTLYTALKAMRENKSIKNALGNHIYNQFINSKSIEWDYYRTQVSEWEREQYIKQY</sequence>
<organism>
    <name type="scientific">Staphylococcus epidermidis (strain ATCC 12228 / FDA PCI 1200)</name>
    <dbReference type="NCBI Taxonomy" id="176280"/>
    <lineage>
        <taxon>Bacteria</taxon>
        <taxon>Bacillati</taxon>
        <taxon>Bacillota</taxon>
        <taxon>Bacilli</taxon>
        <taxon>Bacillales</taxon>
        <taxon>Staphylococcaceae</taxon>
        <taxon>Staphylococcus</taxon>
    </lineage>
</organism>
<feature type="chain" id="PRO_0000153264" description="Glutamine synthetase">
    <location>
        <begin position="1"/>
        <end position="446"/>
    </location>
</feature>
<feature type="domain" description="GS beta-grasp" evidence="5">
    <location>
        <begin position="18"/>
        <end position="103"/>
    </location>
</feature>
<feature type="domain" description="GS catalytic" evidence="6">
    <location>
        <begin position="110"/>
        <end position="446"/>
    </location>
</feature>
<feature type="binding site" evidence="2">
    <location>
        <position position="134"/>
    </location>
    <ligand>
        <name>Mg(2+)</name>
        <dbReference type="ChEBI" id="CHEBI:18420"/>
        <label>1</label>
    </ligand>
</feature>
<feature type="binding site" evidence="2">
    <location>
        <position position="136"/>
    </location>
    <ligand>
        <name>Mg(2+)</name>
        <dbReference type="ChEBI" id="CHEBI:18420"/>
        <label>2</label>
    </ligand>
</feature>
<feature type="binding site" evidence="4">
    <location>
        <position position="186"/>
    </location>
    <ligand>
        <name>ATP</name>
        <dbReference type="ChEBI" id="CHEBI:30616"/>
    </ligand>
</feature>
<feature type="binding site" evidence="2">
    <location>
        <position position="191"/>
    </location>
    <ligand>
        <name>Mg(2+)</name>
        <dbReference type="ChEBI" id="CHEBI:18420"/>
        <label>2</label>
    </ligand>
</feature>
<feature type="binding site" evidence="2">
    <location>
        <position position="198"/>
    </location>
    <ligand>
        <name>Mg(2+)</name>
        <dbReference type="ChEBI" id="CHEBI:18420"/>
        <label>2</label>
    </ligand>
</feature>
<feature type="binding site" evidence="4">
    <location>
        <begin position="242"/>
        <end position="243"/>
    </location>
    <ligand>
        <name>L-glutamate</name>
        <dbReference type="ChEBI" id="CHEBI:29985"/>
    </ligand>
</feature>
<feature type="binding site" evidence="2">
    <location>
        <position position="243"/>
    </location>
    <ligand>
        <name>L-glutamate</name>
        <dbReference type="ChEBI" id="CHEBI:29985"/>
    </ligand>
</feature>
<feature type="binding site" evidence="2">
    <location>
        <position position="247"/>
    </location>
    <ligand>
        <name>Mg(2+)</name>
        <dbReference type="ChEBI" id="CHEBI:18420"/>
        <label>1</label>
    </ligand>
</feature>
<feature type="binding site" evidence="3">
    <location>
        <position position="251"/>
    </location>
    <ligand>
        <name>ATP</name>
        <dbReference type="ChEBI" id="CHEBI:30616"/>
    </ligand>
</feature>
<feature type="binding site" evidence="1">
    <location>
        <position position="300"/>
    </location>
    <ligand>
        <name>L-glutamate</name>
        <dbReference type="ChEBI" id="CHEBI:29985"/>
    </ligand>
</feature>
<feature type="binding site" evidence="1">
    <location>
        <position position="306"/>
    </location>
    <ligand>
        <name>L-glutamate</name>
        <dbReference type="ChEBI" id="CHEBI:29985"/>
    </ligand>
</feature>
<feature type="binding site" evidence="4">
    <location>
        <position position="318"/>
    </location>
    <ligand>
        <name>ATP</name>
        <dbReference type="ChEBI" id="CHEBI:30616"/>
    </ligand>
</feature>
<feature type="binding site" evidence="4">
    <location>
        <position position="318"/>
    </location>
    <ligand>
        <name>L-glutamate</name>
        <dbReference type="ChEBI" id="CHEBI:29985"/>
    </ligand>
</feature>
<feature type="binding site" evidence="4">
    <location>
        <position position="323"/>
    </location>
    <ligand>
        <name>ATP</name>
        <dbReference type="ChEBI" id="CHEBI:30616"/>
    </ligand>
</feature>
<feature type="binding site" evidence="2">
    <location>
        <position position="335"/>
    </location>
    <ligand>
        <name>Mg(2+)</name>
        <dbReference type="ChEBI" id="CHEBI:18420"/>
        <label>1</label>
    </ligand>
</feature>
<feature type="binding site" evidence="1">
    <location>
        <position position="337"/>
    </location>
    <ligand>
        <name>L-glutamate</name>
        <dbReference type="ChEBI" id="CHEBI:29985"/>
    </ligand>
</feature>
<feature type="site" description="Important for inhibition by glutamine" evidence="2">
    <location>
        <position position="64"/>
    </location>
</feature>
<dbReference type="EC" id="6.3.1.2" evidence="2"/>
<dbReference type="EMBL" id="AE015929">
    <property type="protein sequence ID" value="AAO04584.1"/>
    <property type="molecule type" value="Genomic_DNA"/>
</dbReference>
<dbReference type="RefSeq" id="NP_764542.1">
    <property type="nucleotide sequence ID" value="NC_004461.1"/>
</dbReference>
<dbReference type="RefSeq" id="WP_001829492.1">
    <property type="nucleotide sequence ID" value="NZ_WBME01000038.1"/>
</dbReference>
<dbReference type="SMR" id="Q8CSR8"/>
<dbReference type="GeneID" id="50018879"/>
<dbReference type="KEGG" id="sep:SE_0987"/>
<dbReference type="PATRIC" id="fig|176280.10.peg.961"/>
<dbReference type="eggNOG" id="COG0174">
    <property type="taxonomic scope" value="Bacteria"/>
</dbReference>
<dbReference type="HOGENOM" id="CLU_017290_1_3_9"/>
<dbReference type="OrthoDB" id="9807095at2"/>
<dbReference type="Proteomes" id="UP000001411">
    <property type="component" value="Chromosome"/>
</dbReference>
<dbReference type="GO" id="GO:0005737">
    <property type="term" value="C:cytoplasm"/>
    <property type="evidence" value="ECO:0007669"/>
    <property type="project" value="UniProtKB-SubCell"/>
</dbReference>
<dbReference type="GO" id="GO:0005524">
    <property type="term" value="F:ATP binding"/>
    <property type="evidence" value="ECO:0007669"/>
    <property type="project" value="UniProtKB-KW"/>
</dbReference>
<dbReference type="GO" id="GO:0004356">
    <property type="term" value="F:glutamine synthetase activity"/>
    <property type="evidence" value="ECO:0007669"/>
    <property type="project" value="UniProtKB-EC"/>
</dbReference>
<dbReference type="GO" id="GO:0046872">
    <property type="term" value="F:metal ion binding"/>
    <property type="evidence" value="ECO:0007669"/>
    <property type="project" value="UniProtKB-KW"/>
</dbReference>
<dbReference type="GO" id="GO:0006542">
    <property type="term" value="P:glutamine biosynthetic process"/>
    <property type="evidence" value="ECO:0007669"/>
    <property type="project" value="InterPro"/>
</dbReference>
<dbReference type="FunFam" id="3.10.20.70:FF:000005">
    <property type="entry name" value="Glutamine synthetase"/>
    <property type="match status" value="1"/>
</dbReference>
<dbReference type="FunFam" id="3.30.590.10:FF:000003">
    <property type="entry name" value="Glutamine synthetase 2"/>
    <property type="match status" value="1"/>
</dbReference>
<dbReference type="Gene3D" id="3.10.20.70">
    <property type="entry name" value="Glutamine synthetase, N-terminal domain"/>
    <property type="match status" value="1"/>
</dbReference>
<dbReference type="Gene3D" id="3.30.590.10">
    <property type="entry name" value="Glutamine synthetase/guanido kinase, catalytic domain"/>
    <property type="match status" value="1"/>
</dbReference>
<dbReference type="InterPro" id="IPR008147">
    <property type="entry name" value="Gln_synt_N"/>
</dbReference>
<dbReference type="InterPro" id="IPR036651">
    <property type="entry name" value="Gln_synt_N_sf"/>
</dbReference>
<dbReference type="InterPro" id="IPR014746">
    <property type="entry name" value="Gln_synth/guanido_kin_cat_dom"/>
</dbReference>
<dbReference type="InterPro" id="IPR008146">
    <property type="entry name" value="Gln_synth_cat_dom"/>
</dbReference>
<dbReference type="InterPro" id="IPR027303">
    <property type="entry name" value="Gln_synth_gly_rich_site"/>
</dbReference>
<dbReference type="InterPro" id="IPR004809">
    <property type="entry name" value="Gln_synth_I"/>
</dbReference>
<dbReference type="InterPro" id="IPR027302">
    <property type="entry name" value="Gln_synth_N_conserv_site"/>
</dbReference>
<dbReference type="NCBIfam" id="TIGR00653">
    <property type="entry name" value="GlnA"/>
    <property type="match status" value="1"/>
</dbReference>
<dbReference type="PANTHER" id="PTHR43785">
    <property type="entry name" value="GAMMA-GLUTAMYLPUTRESCINE SYNTHETASE"/>
    <property type="match status" value="1"/>
</dbReference>
<dbReference type="PANTHER" id="PTHR43785:SF12">
    <property type="entry name" value="TYPE-1 GLUTAMINE SYNTHETASE 2"/>
    <property type="match status" value="1"/>
</dbReference>
<dbReference type="Pfam" id="PF00120">
    <property type="entry name" value="Gln-synt_C"/>
    <property type="match status" value="1"/>
</dbReference>
<dbReference type="Pfam" id="PF03951">
    <property type="entry name" value="Gln-synt_N"/>
    <property type="match status" value="1"/>
</dbReference>
<dbReference type="SMART" id="SM01230">
    <property type="entry name" value="Gln-synt_C"/>
    <property type="match status" value="1"/>
</dbReference>
<dbReference type="SUPFAM" id="SSF54368">
    <property type="entry name" value="Glutamine synthetase, N-terminal domain"/>
    <property type="match status" value="1"/>
</dbReference>
<dbReference type="SUPFAM" id="SSF55931">
    <property type="entry name" value="Glutamine synthetase/guanido kinase"/>
    <property type="match status" value="1"/>
</dbReference>
<dbReference type="PROSITE" id="PS00180">
    <property type="entry name" value="GLNA_1"/>
    <property type="match status" value="1"/>
</dbReference>
<dbReference type="PROSITE" id="PS00181">
    <property type="entry name" value="GLNA_ATP"/>
    <property type="match status" value="1"/>
</dbReference>
<dbReference type="PROSITE" id="PS51986">
    <property type="entry name" value="GS_BETA_GRASP"/>
    <property type="match status" value="1"/>
</dbReference>
<dbReference type="PROSITE" id="PS51987">
    <property type="entry name" value="GS_CATALYTIC"/>
    <property type="match status" value="1"/>
</dbReference>
<reference key="1">
    <citation type="journal article" date="2003" name="Mol. Microbiol.">
        <title>Genome-based analysis of virulence genes in a non-biofilm-forming Staphylococcus epidermidis strain (ATCC 12228).</title>
        <authorList>
            <person name="Zhang Y.-Q."/>
            <person name="Ren S.-X."/>
            <person name="Li H.-L."/>
            <person name="Wang Y.-X."/>
            <person name="Fu G."/>
            <person name="Yang J."/>
            <person name="Qin Z.-Q."/>
            <person name="Miao Y.-G."/>
            <person name="Wang W.-Y."/>
            <person name="Chen R.-S."/>
            <person name="Shen Y."/>
            <person name="Chen Z."/>
            <person name="Yuan Z.-H."/>
            <person name="Zhao G.-P."/>
            <person name="Qu D."/>
            <person name="Danchin A."/>
            <person name="Wen Y.-M."/>
        </authorList>
    </citation>
    <scope>NUCLEOTIDE SEQUENCE [LARGE SCALE GENOMIC DNA]</scope>
    <source>
        <strain>ATCC 12228 / FDA PCI 1200</strain>
    </source>
</reference>
<accession>Q8CSR8</accession>
<proteinExistence type="inferred from homology"/>